<organism>
    <name type="scientific">Arabidopsis thaliana</name>
    <name type="common">Mouse-ear cress</name>
    <dbReference type="NCBI Taxonomy" id="3702"/>
    <lineage>
        <taxon>Eukaryota</taxon>
        <taxon>Viridiplantae</taxon>
        <taxon>Streptophyta</taxon>
        <taxon>Embryophyta</taxon>
        <taxon>Tracheophyta</taxon>
        <taxon>Spermatophyta</taxon>
        <taxon>Magnoliopsida</taxon>
        <taxon>eudicotyledons</taxon>
        <taxon>Gunneridae</taxon>
        <taxon>Pentapetalae</taxon>
        <taxon>rosids</taxon>
        <taxon>malvids</taxon>
        <taxon>Brassicales</taxon>
        <taxon>Brassicaceae</taxon>
        <taxon>Camelineae</taxon>
        <taxon>Arabidopsis</taxon>
    </lineage>
</organism>
<accession>P59224</accession>
<accession>O81311</accession>
<accession>P49203</accession>
<accession>Q9SLR4</accession>
<protein>
    <recommendedName>
        <fullName evidence="1">Small ribosomal subunit protein uS15y</fullName>
    </recommendedName>
    <alternativeName>
        <fullName>40S ribosomal protein S13-2</fullName>
    </alternativeName>
</protein>
<reference key="1">
    <citation type="journal article" date="2000" name="Plant J.">
        <title>Disruption of an Arabidopsis cytoplasmic ribosomal protein S13-homologous gene by transposon-mediated mutagenesis causes aberrant growth and development.</title>
        <authorList>
            <person name="Ito T."/>
            <person name="Kim G.-T."/>
            <person name="Shinozaki K."/>
        </authorList>
    </citation>
    <scope>NUCLEOTIDE SEQUENCE [MRNA]</scope>
</reference>
<reference key="2">
    <citation type="journal article" date="1999" name="Nature">
        <title>Sequence and analysis of chromosome 4 of the plant Arabidopsis thaliana.</title>
        <authorList>
            <person name="Mayer K.F.X."/>
            <person name="Schueller C."/>
            <person name="Wambutt R."/>
            <person name="Murphy G."/>
            <person name="Volckaert G."/>
            <person name="Pohl T."/>
            <person name="Duesterhoeft A."/>
            <person name="Stiekema W."/>
            <person name="Entian K.-D."/>
            <person name="Terryn N."/>
            <person name="Harris B."/>
            <person name="Ansorge W."/>
            <person name="Brandt P."/>
            <person name="Grivell L.A."/>
            <person name="Rieger M."/>
            <person name="Weichselgartner M."/>
            <person name="de Simone V."/>
            <person name="Obermaier B."/>
            <person name="Mache R."/>
            <person name="Mueller M."/>
            <person name="Kreis M."/>
            <person name="Delseny M."/>
            <person name="Puigdomenech P."/>
            <person name="Watson M."/>
            <person name="Schmidtheini T."/>
            <person name="Reichert B."/>
            <person name="Portetelle D."/>
            <person name="Perez-Alonso M."/>
            <person name="Boutry M."/>
            <person name="Bancroft I."/>
            <person name="Vos P."/>
            <person name="Hoheisel J."/>
            <person name="Zimmermann W."/>
            <person name="Wedler H."/>
            <person name="Ridley P."/>
            <person name="Langham S.-A."/>
            <person name="McCullagh B."/>
            <person name="Bilham L."/>
            <person name="Robben J."/>
            <person name="van der Schueren J."/>
            <person name="Grymonprez B."/>
            <person name="Chuang Y.-J."/>
            <person name="Vandenbussche F."/>
            <person name="Braeken M."/>
            <person name="Weltjens I."/>
            <person name="Voet M."/>
            <person name="Bastiaens I."/>
            <person name="Aert R."/>
            <person name="Defoor E."/>
            <person name="Weitzenegger T."/>
            <person name="Bothe G."/>
            <person name="Ramsperger U."/>
            <person name="Hilbert H."/>
            <person name="Braun M."/>
            <person name="Holzer E."/>
            <person name="Brandt A."/>
            <person name="Peters S."/>
            <person name="van Staveren M."/>
            <person name="Dirkse W."/>
            <person name="Mooijman P."/>
            <person name="Klein Lankhorst R."/>
            <person name="Rose M."/>
            <person name="Hauf J."/>
            <person name="Koetter P."/>
            <person name="Berneiser S."/>
            <person name="Hempel S."/>
            <person name="Feldpausch M."/>
            <person name="Lamberth S."/>
            <person name="Van den Daele H."/>
            <person name="De Keyser A."/>
            <person name="Buysshaert C."/>
            <person name="Gielen J."/>
            <person name="Villarroel R."/>
            <person name="De Clercq R."/>
            <person name="van Montagu M."/>
            <person name="Rogers J."/>
            <person name="Cronin A."/>
            <person name="Quail M.A."/>
            <person name="Bray-Allen S."/>
            <person name="Clark L."/>
            <person name="Doggett J."/>
            <person name="Hall S."/>
            <person name="Kay M."/>
            <person name="Lennard N."/>
            <person name="McLay K."/>
            <person name="Mayes R."/>
            <person name="Pettett A."/>
            <person name="Rajandream M.A."/>
            <person name="Lyne M."/>
            <person name="Benes V."/>
            <person name="Rechmann S."/>
            <person name="Borkova D."/>
            <person name="Bloecker H."/>
            <person name="Scharfe M."/>
            <person name="Grimm M."/>
            <person name="Loehnert T.-H."/>
            <person name="Dose S."/>
            <person name="de Haan M."/>
            <person name="Maarse A.C."/>
            <person name="Schaefer M."/>
            <person name="Mueller-Auer S."/>
            <person name="Gabel C."/>
            <person name="Fuchs M."/>
            <person name="Fartmann B."/>
            <person name="Granderath K."/>
            <person name="Dauner D."/>
            <person name="Herzl A."/>
            <person name="Neumann S."/>
            <person name="Argiriou A."/>
            <person name="Vitale D."/>
            <person name="Liguori R."/>
            <person name="Piravandi E."/>
            <person name="Massenet O."/>
            <person name="Quigley F."/>
            <person name="Clabauld G."/>
            <person name="Muendlein A."/>
            <person name="Felber R."/>
            <person name="Schnabl S."/>
            <person name="Hiller R."/>
            <person name="Schmidt W."/>
            <person name="Lecharny A."/>
            <person name="Aubourg S."/>
            <person name="Chefdor F."/>
            <person name="Cooke R."/>
            <person name="Berger C."/>
            <person name="Monfort A."/>
            <person name="Casacuberta E."/>
            <person name="Gibbons T."/>
            <person name="Weber N."/>
            <person name="Vandenbol M."/>
            <person name="Bargues M."/>
            <person name="Terol J."/>
            <person name="Torres A."/>
            <person name="Perez-Perez A."/>
            <person name="Purnelle B."/>
            <person name="Bent E."/>
            <person name="Johnson S."/>
            <person name="Tacon D."/>
            <person name="Jesse T."/>
            <person name="Heijnen L."/>
            <person name="Schwarz S."/>
            <person name="Scholler P."/>
            <person name="Heber S."/>
            <person name="Francs P."/>
            <person name="Bielke C."/>
            <person name="Frishman D."/>
            <person name="Haase D."/>
            <person name="Lemcke K."/>
            <person name="Mewes H.-W."/>
            <person name="Stocker S."/>
            <person name="Zaccaria P."/>
            <person name="Bevan M."/>
            <person name="Wilson R.K."/>
            <person name="de la Bastide M."/>
            <person name="Habermann K."/>
            <person name="Parnell L."/>
            <person name="Dedhia N."/>
            <person name="Gnoj L."/>
            <person name="Schutz K."/>
            <person name="Huang E."/>
            <person name="Spiegel L."/>
            <person name="Sekhon M."/>
            <person name="Murray J."/>
            <person name="Sheet P."/>
            <person name="Cordes M."/>
            <person name="Abu-Threideh J."/>
            <person name="Stoneking T."/>
            <person name="Kalicki J."/>
            <person name="Graves T."/>
            <person name="Harmon G."/>
            <person name="Edwards J."/>
            <person name="Latreille P."/>
            <person name="Courtney L."/>
            <person name="Cloud J."/>
            <person name="Abbott A."/>
            <person name="Scott K."/>
            <person name="Johnson D."/>
            <person name="Minx P."/>
            <person name="Bentley D."/>
            <person name="Fulton B."/>
            <person name="Miller N."/>
            <person name="Greco T."/>
            <person name="Kemp K."/>
            <person name="Kramer J."/>
            <person name="Fulton L."/>
            <person name="Mardis E."/>
            <person name="Dante M."/>
            <person name="Pepin K."/>
            <person name="Hillier L.W."/>
            <person name="Nelson J."/>
            <person name="Spieth J."/>
            <person name="Ryan E."/>
            <person name="Andrews S."/>
            <person name="Geisel C."/>
            <person name="Layman D."/>
            <person name="Du H."/>
            <person name="Ali J."/>
            <person name="Berghoff A."/>
            <person name="Jones K."/>
            <person name="Drone K."/>
            <person name="Cotton M."/>
            <person name="Joshu C."/>
            <person name="Antonoiu B."/>
            <person name="Zidanic M."/>
            <person name="Strong C."/>
            <person name="Sun H."/>
            <person name="Lamar B."/>
            <person name="Yordan C."/>
            <person name="Ma P."/>
            <person name="Zhong J."/>
            <person name="Preston R."/>
            <person name="Vil D."/>
            <person name="Shekher M."/>
            <person name="Matero A."/>
            <person name="Shah R."/>
            <person name="Swaby I.K."/>
            <person name="O'Shaughnessy A."/>
            <person name="Rodriguez M."/>
            <person name="Hoffman J."/>
            <person name="Till S."/>
            <person name="Granat S."/>
            <person name="Shohdy N."/>
            <person name="Hasegawa A."/>
            <person name="Hameed A."/>
            <person name="Lodhi M."/>
            <person name="Johnson A."/>
            <person name="Chen E."/>
            <person name="Marra M.A."/>
            <person name="Martienssen R."/>
            <person name="McCombie W.R."/>
        </authorList>
    </citation>
    <scope>NUCLEOTIDE SEQUENCE [LARGE SCALE GENOMIC DNA]</scope>
    <source>
        <strain>cv. Columbia</strain>
    </source>
</reference>
<reference key="3">
    <citation type="journal article" date="2017" name="Plant J.">
        <title>Araport11: a complete reannotation of the Arabidopsis thaliana reference genome.</title>
        <authorList>
            <person name="Cheng C.Y."/>
            <person name="Krishnakumar V."/>
            <person name="Chan A.P."/>
            <person name="Thibaud-Nissen F."/>
            <person name="Schobel S."/>
            <person name="Town C.D."/>
        </authorList>
    </citation>
    <scope>GENOME REANNOTATION</scope>
    <source>
        <strain>cv. Columbia</strain>
    </source>
</reference>
<reference key="4">
    <citation type="journal article" date="2003" name="Science">
        <title>Empirical analysis of transcriptional activity in the Arabidopsis genome.</title>
        <authorList>
            <person name="Yamada K."/>
            <person name="Lim J."/>
            <person name="Dale J.M."/>
            <person name="Chen H."/>
            <person name="Shinn P."/>
            <person name="Palm C.J."/>
            <person name="Southwick A.M."/>
            <person name="Wu H.C."/>
            <person name="Kim C.J."/>
            <person name="Nguyen M."/>
            <person name="Pham P.K."/>
            <person name="Cheuk R.F."/>
            <person name="Karlin-Newmann G."/>
            <person name="Liu S.X."/>
            <person name="Lam B."/>
            <person name="Sakano H."/>
            <person name="Wu T."/>
            <person name="Yu G."/>
            <person name="Miranda M."/>
            <person name="Quach H.L."/>
            <person name="Tripp M."/>
            <person name="Chang C.H."/>
            <person name="Lee J.M."/>
            <person name="Toriumi M.J."/>
            <person name="Chan M.M."/>
            <person name="Tang C.C."/>
            <person name="Onodera C.S."/>
            <person name="Deng J.M."/>
            <person name="Akiyama K."/>
            <person name="Ansari Y."/>
            <person name="Arakawa T."/>
            <person name="Banh J."/>
            <person name="Banno F."/>
            <person name="Bowser L."/>
            <person name="Brooks S.Y."/>
            <person name="Carninci P."/>
            <person name="Chao Q."/>
            <person name="Choy N."/>
            <person name="Enju A."/>
            <person name="Goldsmith A.D."/>
            <person name="Gurjal M."/>
            <person name="Hansen N.F."/>
            <person name="Hayashizaki Y."/>
            <person name="Johnson-Hopson C."/>
            <person name="Hsuan V.W."/>
            <person name="Iida K."/>
            <person name="Karnes M."/>
            <person name="Khan S."/>
            <person name="Koesema E."/>
            <person name="Ishida J."/>
            <person name="Jiang P.X."/>
            <person name="Jones T."/>
            <person name="Kawai J."/>
            <person name="Kamiya A."/>
            <person name="Meyers C."/>
            <person name="Nakajima M."/>
            <person name="Narusaka M."/>
            <person name="Seki M."/>
            <person name="Sakurai T."/>
            <person name="Satou M."/>
            <person name="Tamse R."/>
            <person name="Vaysberg M."/>
            <person name="Wallender E.K."/>
            <person name="Wong C."/>
            <person name="Yamamura Y."/>
            <person name="Yuan S."/>
            <person name="Shinozaki K."/>
            <person name="Davis R.W."/>
            <person name="Theologis A."/>
            <person name="Ecker J.R."/>
        </authorList>
    </citation>
    <scope>NUCLEOTIDE SEQUENCE [LARGE SCALE MRNA]</scope>
    <source>
        <strain>cv. Columbia</strain>
    </source>
</reference>
<reference key="5">
    <citation type="submission" date="2002-03" db="EMBL/GenBank/DDBJ databases">
        <title>Full-length cDNA from Arabidopsis thaliana.</title>
        <authorList>
            <person name="Brover V.V."/>
            <person name="Troukhan M.E."/>
            <person name="Alexandrov N.A."/>
            <person name="Lu Y.-P."/>
            <person name="Flavell R.B."/>
            <person name="Feldmann K.A."/>
        </authorList>
    </citation>
    <scope>NUCLEOTIDE SEQUENCE [LARGE SCALE MRNA]</scope>
</reference>
<reference key="6">
    <citation type="journal article" date="1996" name="Plant J.">
        <title>Further progress towards a catalogue of all Arabidopsis genes: analysis of a set of 5000 non-redundant ESTs.</title>
        <authorList>
            <person name="Cooke R."/>
            <person name="Raynal M."/>
            <person name="Laudie M."/>
            <person name="Grellet F."/>
            <person name="Delseny M."/>
            <person name="Morris P.-C."/>
            <person name="Guerrier D."/>
            <person name="Giraudat J."/>
            <person name="Quigley F."/>
            <person name="Clabault G."/>
            <person name="Li Y.-F."/>
            <person name="Mache R."/>
            <person name="Krivitzky M."/>
            <person name="Gy I.J.-J."/>
            <person name="Kreis M."/>
            <person name="Lecharny A."/>
            <person name="Parmentier Y."/>
            <person name="Marbach J."/>
            <person name="Fleck J."/>
            <person name="Clement B."/>
            <person name="Philipps G."/>
            <person name="Herve C."/>
            <person name="Bardet C."/>
            <person name="Tremousaygue D."/>
            <person name="Lescure B."/>
            <person name="Lacomme C."/>
            <person name="Roby D."/>
            <person name="Jourjon M.-F."/>
            <person name="Chabrier P."/>
            <person name="Charpenteau J.-L."/>
            <person name="Desprez T."/>
            <person name="Amselem J."/>
            <person name="Chiapello H."/>
            <person name="Hoefte H."/>
        </authorList>
    </citation>
    <scope>NUCLEOTIDE SEQUENCE [LARGE SCALE MRNA] OF 1-118</scope>
    <source>
        <strain>cv. Columbia</strain>
        <tissue>Seedling</tissue>
    </source>
</reference>
<reference key="7">
    <citation type="journal article" date="2001" name="Plant Physiol.">
        <title>The organization of cytoplasmic ribosomal protein genes in the Arabidopsis genome.</title>
        <authorList>
            <person name="Barakat A."/>
            <person name="Szick-Miranda K."/>
            <person name="Chang I.-F."/>
            <person name="Guyot R."/>
            <person name="Blanc G."/>
            <person name="Cooke R."/>
            <person name="Delseny M."/>
            <person name="Bailey-Serres J."/>
        </authorList>
    </citation>
    <scope>GENE FAMILY ORGANIZATION</scope>
    <scope>NOMENCLATURE</scope>
</reference>
<reference key="8">
    <citation type="journal article" date="2023" name="Plant Cell">
        <title>An updated nomenclature for plant ribosomal protein genes.</title>
        <authorList>
            <person name="Scarpin M.R."/>
            <person name="Busche M."/>
            <person name="Martinez R.E."/>
            <person name="Harper L.C."/>
            <person name="Reiser L."/>
            <person name="Szakonyi D."/>
            <person name="Merchante C."/>
            <person name="Lan T."/>
            <person name="Xiong W."/>
            <person name="Mo B."/>
            <person name="Tang G."/>
            <person name="Chen X."/>
            <person name="Bailey-Serres J."/>
            <person name="Browning K.S."/>
            <person name="Brunkard J.O."/>
        </authorList>
    </citation>
    <scope>NOMENCLATURE</scope>
</reference>
<keyword id="KW-1185">Reference proteome</keyword>
<keyword id="KW-0687">Ribonucleoprotein</keyword>
<keyword id="KW-0689">Ribosomal protein</keyword>
<comment type="similarity">
    <text evidence="2">Belongs to the universal ribosomal protein uS15 family.</text>
</comment>
<comment type="sequence caution" evidence="2">
    <conflict type="erroneous gene model prediction">
        <sequence resource="EMBL-CDS" id="AAC19305"/>
    </conflict>
</comment>
<comment type="sequence caution" evidence="2">
    <conflict type="erroneous gene model prediction">
        <sequence resource="EMBL-CDS" id="CAB80768"/>
    </conflict>
</comment>
<gene>
    <name type="primary">RPS13B</name>
    <name type="ordered locus">At4g00100</name>
    <name type="ORF">F6N15.7</name>
</gene>
<dbReference type="EMBL" id="AB031739">
    <property type="protein sequence ID" value="BAA88058.1"/>
    <property type="molecule type" value="mRNA"/>
</dbReference>
<dbReference type="EMBL" id="AF069299">
    <property type="protein sequence ID" value="AAC19305.1"/>
    <property type="status" value="ALT_SEQ"/>
    <property type="molecule type" value="Genomic_DNA"/>
</dbReference>
<dbReference type="EMBL" id="AL161471">
    <property type="protein sequence ID" value="CAB80768.1"/>
    <property type="status" value="ALT_SEQ"/>
    <property type="molecule type" value="Genomic_DNA"/>
</dbReference>
<dbReference type="EMBL" id="CP002687">
    <property type="protein sequence ID" value="AEE81823.1"/>
    <property type="molecule type" value="Genomic_DNA"/>
</dbReference>
<dbReference type="EMBL" id="AF370471">
    <property type="protein sequence ID" value="AAK43848.1"/>
    <property type="molecule type" value="mRNA"/>
</dbReference>
<dbReference type="EMBL" id="AY057544">
    <property type="protein sequence ID" value="AAL09784.1"/>
    <property type="molecule type" value="mRNA"/>
</dbReference>
<dbReference type="EMBL" id="BT006543">
    <property type="protein sequence ID" value="AAP21351.1"/>
    <property type="molecule type" value="mRNA"/>
</dbReference>
<dbReference type="EMBL" id="AY088038">
    <property type="protein sequence ID" value="AAM65584.1"/>
    <property type="molecule type" value="mRNA"/>
</dbReference>
<dbReference type="EMBL" id="Z29915">
    <property type="protein sequence ID" value="CAA82837.1"/>
    <property type="molecule type" value="mRNA"/>
</dbReference>
<dbReference type="PIR" id="T01338">
    <property type="entry name" value="T01338"/>
</dbReference>
<dbReference type="PIR" id="T47888">
    <property type="entry name" value="T47888"/>
</dbReference>
<dbReference type="RefSeq" id="NP_567151.1">
    <property type="nucleotide sequence ID" value="NM_116227.4"/>
</dbReference>
<dbReference type="SMR" id="P59224"/>
<dbReference type="BioGRID" id="13456">
    <property type="interactions" value="150"/>
</dbReference>
<dbReference type="FunCoup" id="P59224">
    <property type="interactions" value="3223"/>
</dbReference>
<dbReference type="IntAct" id="P59224">
    <property type="interactions" value="1"/>
</dbReference>
<dbReference type="STRING" id="3702.P59224"/>
<dbReference type="iPTMnet" id="P59224"/>
<dbReference type="PaxDb" id="3702-AT4G00100.1"/>
<dbReference type="ProteomicsDB" id="236207"/>
<dbReference type="EnsemblPlants" id="AT4G00100.1">
    <property type="protein sequence ID" value="AT4G00100.1"/>
    <property type="gene ID" value="AT4G00100"/>
</dbReference>
<dbReference type="GeneID" id="828167"/>
<dbReference type="Gramene" id="AT4G00100.1">
    <property type="protein sequence ID" value="AT4G00100.1"/>
    <property type="gene ID" value="AT4G00100"/>
</dbReference>
<dbReference type="KEGG" id="ath:AT4G00100"/>
<dbReference type="Araport" id="AT4G00100"/>
<dbReference type="TAIR" id="AT4G00100">
    <property type="gene designation" value="RPS13A"/>
</dbReference>
<dbReference type="eggNOG" id="KOG0400">
    <property type="taxonomic scope" value="Eukaryota"/>
</dbReference>
<dbReference type="HOGENOM" id="CLU_090139_2_0_1"/>
<dbReference type="InParanoid" id="P59224"/>
<dbReference type="OMA" id="ATASALX"/>
<dbReference type="OrthoDB" id="1041134at2759"/>
<dbReference type="PhylomeDB" id="P59224"/>
<dbReference type="CD-CODE" id="4299E36E">
    <property type="entry name" value="Nucleolus"/>
</dbReference>
<dbReference type="PRO" id="PR:P59224"/>
<dbReference type="Proteomes" id="UP000006548">
    <property type="component" value="Chromosome 4"/>
</dbReference>
<dbReference type="ExpressionAtlas" id="P59224">
    <property type="expression patterns" value="baseline and differential"/>
</dbReference>
<dbReference type="GO" id="GO:0005829">
    <property type="term" value="C:cytosol"/>
    <property type="evidence" value="ECO:0007005"/>
    <property type="project" value="TAIR"/>
</dbReference>
<dbReference type="GO" id="GO:0022627">
    <property type="term" value="C:cytosolic small ribosomal subunit"/>
    <property type="evidence" value="ECO:0007005"/>
    <property type="project" value="TAIR"/>
</dbReference>
<dbReference type="GO" id="GO:0005783">
    <property type="term" value="C:endoplasmic reticulum"/>
    <property type="evidence" value="ECO:0007005"/>
    <property type="project" value="TAIR"/>
</dbReference>
<dbReference type="GO" id="GO:0005730">
    <property type="term" value="C:nucleolus"/>
    <property type="evidence" value="ECO:0007005"/>
    <property type="project" value="TAIR"/>
</dbReference>
<dbReference type="GO" id="GO:0003729">
    <property type="term" value="F:mRNA binding"/>
    <property type="evidence" value="ECO:0000314"/>
    <property type="project" value="TAIR"/>
</dbReference>
<dbReference type="GO" id="GO:0003735">
    <property type="term" value="F:structural constituent of ribosome"/>
    <property type="evidence" value="ECO:0000314"/>
    <property type="project" value="CAFA"/>
</dbReference>
<dbReference type="GO" id="GO:0000911">
    <property type="term" value="P:cytokinesis by cell plate formation"/>
    <property type="evidence" value="ECO:0000315"/>
    <property type="project" value="TAIR"/>
</dbReference>
<dbReference type="GO" id="GO:0009965">
    <property type="term" value="P:leaf morphogenesis"/>
    <property type="evidence" value="ECO:0000315"/>
    <property type="project" value="TAIR"/>
</dbReference>
<dbReference type="GO" id="GO:0006412">
    <property type="term" value="P:translation"/>
    <property type="evidence" value="ECO:0000304"/>
    <property type="project" value="TAIR"/>
</dbReference>
<dbReference type="GO" id="GO:0010090">
    <property type="term" value="P:trichome morphogenesis"/>
    <property type="evidence" value="ECO:0000315"/>
    <property type="project" value="TAIR"/>
</dbReference>
<dbReference type="CDD" id="cd00353">
    <property type="entry name" value="Ribosomal_S15p_S13e"/>
    <property type="match status" value="1"/>
</dbReference>
<dbReference type="FunFam" id="1.10.287.10:FF:000003">
    <property type="entry name" value="40S ribosomal protein S13"/>
    <property type="match status" value="1"/>
</dbReference>
<dbReference type="FunFam" id="4.10.860.130:FF:000001">
    <property type="entry name" value="40S ribosomal protein S13"/>
    <property type="match status" value="1"/>
</dbReference>
<dbReference type="Gene3D" id="4.10.860.130">
    <property type="match status" value="1"/>
</dbReference>
<dbReference type="Gene3D" id="1.10.287.10">
    <property type="entry name" value="S15/NS1, RNA-binding"/>
    <property type="match status" value="1"/>
</dbReference>
<dbReference type="HAMAP" id="MF_01343_A">
    <property type="entry name" value="Ribosomal_uS15_A"/>
    <property type="match status" value="1"/>
</dbReference>
<dbReference type="InterPro" id="IPR000589">
    <property type="entry name" value="Ribosomal_uS15"/>
</dbReference>
<dbReference type="InterPro" id="IPR023029">
    <property type="entry name" value="Ribosomal_uS15_arc_euk"/>
</dbReference>
<dbReference type="InterPro" id="IPR012606">
    <property type="entry name" value="Ribosomal_uS15_N"/>
</dbReference>
<dbReference type="InterPro" id="IPR009068">
    <property type="entry name" value="uS15_NS1_RNA-bd_sf"/>
</dbReference>
<dbReference type="NCBIfam" id="NF006331">
    <property type="entry name" value="PRK08561.1"/>
    <property type="match status" value="1"/>
</dbReference>
<dbReference type="PANTHER" id="PTHR11885">
    <property type="entry name" value="RIBOSOMAL PROTEIN S15P/S13E"/>
    <property type="match status" value="1"/>
</dbReference>
<dbReference type="PANTHER" id="PTHR11885:SF25">
    <property type="entry name" value="SMALL RIBOSOMAL SUBUNIT PROTEIN US15Y-RELATED"/>
    <property type="match status" value="1"/>
</dbReference>
<dbReference type="Pfam" id="PF08069">
    <property type="entry name" value="Ribosomal_S13_N"/>
    <property type="match status" value="1"/>
</dbReference>
<dbReference type="Pfam" id="PF00312">
    <property type="entry name" value="Ribosomal_S15"/>
    <property type="match status" value="1"/>
</dbReference>
<dbReference type="SMART" id="SM01386">
    <property type="entry name" value="Ribosomal_S13_N"/>
    <property type="match status" value="1"/>
</dbReference>
<dbReference type="SMART" id="SM01387">
    <property type="entry name" value="Ribosomal_S15"/>
    <property type="match status" value="1"/>
</dbReference>
<dbReference type="SUPFAM" id="SSF47060">
    <property type="entry name" value="S15/NS1 RNA-binding domain"/>
    <property type="match status" value="1"/>
</dbReference>
<dbReference type="PROSITE" id="PS00362">
    <property type="entry name" value="RIBOSOMAL_S15"/>
    <property type="match status" value="1"/>
</dbReference>
<sequence length="151" mass="17085">MGRMHSRGKGISASALPYKRSSPSWLKTTSQDVDESICKFAKKGLTPSQIGVILRDSHGIPQVKSVTGSKILRILKAHGLAPEIPEDLYHLIKKAVAIRKHLERNRKDKDSKFRLILVESRIHRLARYYKKTKKLPPVWKYESTTASTLVA</sequence>
<name>RS132_ARATH</name>
<evidence type="ECO:0000303" key="1">
    <source>
    </source>
</evidence>
<evidence type="ECO:0000305" key="2"/>
<proteinExistence type="evidence at transcript level"/>
<feature type="chain" id="PRO_0000115681" description="Small ribosomal subunit protein uS15y">
    <location>
        <begin position="1"/>
        <end position="151"/>
    </location>
</feature>